<keyword id="KW-0020">Allergen</keyword>
<keyword id="KW-0903">Direct protein sequencing</keyword>
<keyword id="KW-1015">Disulfide bond</keyword>
<keyword id="KW-0964">Secreted</keyword>
<feature type="chain" id="PRO_0000211538" description="Venom allergen 5">
    <location>
        <begin position="1"/>
        <end position="207"/>
    </location>
</feature>
<feature type="domain" description="SCP">
    <location>
        <begin position="48"/>
        <end position="192"/>
    </location>
</feature>
<feature type="disulfide bond" evidence="1">
    <location>
        <begin position="4"/>
        <end position="16"/>
    </location>
</feature>
<feature type="disulfide bond" evidence="1">
    <location>
        <begin position="8"/>
        <end position="105"/>
    </location>
</feature>
<feature type="disulfide bond" evidence="1">
    <location>
        <begin position="29"/>
        <end position="97"/>
    </location>
</feature>
<feature type="disulfide bond" evidence="1">
    <location>
        <begin position="173"/>
        <end position="190"/>
    </location>
</feature>
<feature type="sequence conflict" description="In Ref. 2; AAP57536." evidence="3" ref="2">
    <location>
        <position position="28"/>
    </location>
</feature>
<feature type="sequence conflict" description="In Ref. 2; AAP57536." evidence="3" ref="2">
    <original>N</original>
    <variation>S</variation>
    <location>
        <position position="95"/>
    </location>
</feature>
<feature type="sequence conflict" description="In Ref. 2; AAP57536." evidence="3" ref="2">
    <original>A</original>
    <variation>S</variation>
    <location>
        <position position="155"/>
    </location>
</feature>
<evidence type="ECO:0000250" key="1">
    <source>
        <dbReference type="UniProtKB" id="P10736"/>
    </source>
</evidence>
<evidence type="ECO:0000269" key="2">
    <source>
    </source>
</evidence>
<evidence type="ECO:0000305" key="3"/>
<evidence type="ECO:0000312" key="4">
    <source>
        <dbReference type="EMBL" id="AAP57536.1"/>
    </source>
</evidence>
<reference evidence="3" key="1">
    <citation type="journal article" date="2002" name="Arch. Biochem. Biophys.">
        <title>Structural and immunological aspects of Polybia scutellaris antigen 5.</title>
        <authorList>
            <person name="Pirpignani M.L."/>
            <person name="Rivera E."/>
            <person name="Hellman U."/>
            <person name="Biscoglio de Jimenez Bonino M."/>
        </authorList>
    </citation>
    <scope>PROTEIN SEQUENCE</scope>
    <scope>SUBUNIT</scope>
    <scope>TISSUE SPECIFICITY</scope>
    <scope>ALLERGEN</scope>
    <source>
        <tissue evidence="2">Venom</tissue>
    </source>
</reference>
<reference evidence="4" key="2">
    <citation type="submission" date="2003-05" db="EMBL/GenBank/DDBJ databases">
        <title>cDNA cloning of Polybia scutellaris Ag5.</title>
        <authorList>
            <person name="Pirpignani M.L."/>
            <person name="King T.P."/>
            <person name="Biscoglio M."/>
        </authorList>
    </citation>
    <scope>NUCLEOTIDE SEQUENCE [MRNA]</scope>
</reference>
<comment type="subunit">
    <text evidence="2">Monomer.</text>
</comment>
<comment type="subcellular location">
    <subcellularLocation>
        <location>Secreted</location>
    </subcellularLocation>
</comment>
<comment type="tissue specificity">
    <text evidence="2">Expressed by the venom gland.</text>
</comment>
<comment type="allergen">
    <text evidence="2">Causes an allergic reaction in human. In most vespids, Antigen 5 is a potent allergen. Pol s 5 is a variant with a much lower allergenicity. It has a reduced IgE response and anaphylactic activity.</text>
</comment>
<comment type="similarity">
    <text evidence="3">Belongs to the CRISP family. Venom allergen 5-like subfamily.</text>
</comment>
<dbReference type="EMBL" id="AY299635">
    <property type="protein sequence ID" value="AAP57536.1"/>
    <property type="molecule type" value="mRNA"/>
</dbReference>
<dbReference type="SMR" id="Q7Z156"/>
<dbReference type="Allergome" id="3494">
    <property type="allergen name" value="Poly s 5.0101"/>
</dbReference>
<dbReference type="Allergome" id="771">
    <property type="allergen name" value="Poly s 5"/>
</dbReference>
<dbReference type="GO" id="GO:0005576">
    <property type="term" value="C:extracellular region"/>
    <property type="evidence" value="ECO:0007669"/>
    <property type="project" value="UniProtKB-SubCell"/>
</dbReference>
<dbReference type="CDD" id="cd05380">
    <property type="entry name" value="CAP_euk"/>
    <property type="match status" value="1"/>
</dbReference>
<dbReference type="Gene3D" id="3.40.33.10">
    <property type="entry name" value="CAP"/>
    <property type="match status" value="1"/>
</dbReference>
<dbReference type="InterPro" id="IPR018244">
    <property type="entry name" value="Allrgn_V5/Tpx1_CS"/>
</dbReference>
<dbReference type="InterPro" id="IPR014044">
    <property type="entry name" value="CAP_dom"/>
</dbReference>
<dbReference type="InterPro" id="IPR035940">
    <property type="entry name" value="CAP_sf"/>
</dbReference>
<dbReference type="InterPro" id="IPR001283">
    <property type="entry name" value="CRISP-related"/>
</dbReference>
<dbReference type="InterPro" id="IPR002413">
    <property type="entry name" value="V5_allergen-like"/>
</dbReference>
<dbReference type="PANTHER" id="PTHR10334">
    <property type="entry name" value="CYSTEINE-RICH SECRETORY PROTEIN-RELATED"/>
    <property type="match status" value="1"/>
</dbReference>
<dbReference type="Pfam" id="PF00188">
    <property type="entry name" value="CAP"/>
    <property type="match status" value="1"/>
</dbReference>
<dbReference type="PRINTS" id="PR00838">
    <property type="entry name" value="V5ALLERGEN"/>
</dbReference>
<dbReference type="PRINTS" id="PR00837">
    <property type="entry name" value="V5TPXLIKE"/>
</dbReference>
<dbReference type="SMART" id="SM00198">
    <property type="entry name" value="SCP"/>
    <property type="match status" value="1"/>
</dbReference>
<dbReference type="SUPFAM" id="SSF55797">
    <property type="entry name" value="PR-1-like"/>
    <property type="match status" value="1"/>
</dbReference>
<dbReference type="PROSITE" id="PS01009">
    <property type="entry name" value="CRISP_1"/>
    <property type="match status" value="1"/>
</dbReference>
<dbReference type="PROSITE" id="PS01010">
    <property type="entry name" value="CRISP_2"/>
    <property type="match status" value="1"/>
</dbReference>
<protein>
    <recommendedName>
        <fullName>Venom allergen 5</fullName>
    </recommendedName>
    <alternativeName>
        <fullName>Allergen Pol s V</fullName>
    </alternativeName>
    <alternativeName>
        <fullName>Antigen 5</fullName>
        <shortName>Ag5</shortName>
    </alternativeName>
    <alternativeName>
        <fullName>Cysteine-rich venom protein</fullName>
        <shortName>CRVP</shortName>
    </alternativeName>
    <allergenName>Pol s 5</allergenName>
</protein>
<name>VA5_POLSR</name>
<accession>Q7Z156</accession>
<accession>P82958</accession>
<proteinExistence type="evidence at protein level"/>
<sequence length="207" mass="23209">NKYCNIKCSKVAHTVCQYGESTKPSSKNCNKVSITSVGVTEEEKKLIVDEHNRFRQKVAQGLETRGNPGPQPAASDMNNLVWNDELAYIAQVWANQCQFFVHDKCRNTAQYQVGQNIAYSASTAAYPGIVSLIVLWENEVKDFNYSQGITKENFAKVGHYTQVVWAKTKEVGCGSIKYIEKGMKSHYLVCNYGPAGNYMGQPIYTKK</sequence>
<organism>
    <name type="scientific">Polybia scutellaris rioplatensis</name>
    <name type="common">Camoati</name>
    <dbReference type="NCBI Taxonomy" id="260979"/>
    <lineage>
        <taxon>Eukaryota</taxon>
        <taxon>Metazoa</taxon>
        <taxon>Ecdysozoa</taxon>
        <taxon>Arthropoda</taxon>
        <taxon>Hexapoda</taxon>
        <taxon>Insecta</taxon>
        <taxon>Pterygota</taxon>
        <taxon>Neoptera</taxon>
        <taxon>Endopterygota</taxon>
        <taxon>Hymenoptera</taxon>
        <taxon>Apocrita</taxon>
        <taxon>Aculeata</taxon>
        <taxon>Vespoidea</taxon>
        <taxon>Vespidae</taxon>
        <taxon>Polistinae</taxon>
        <taxon>Epiponini</taxon>
        <taxon>Polybia</taxon>
    </lineage>
</organism>